<organism>
    <name type="scientific">Mus musculus</name>
    <name type="common">Mouse</name>
    <dbReference type="NCBI Taxonomy" id="10090"/>
    <lineage>
        <taxon>Eukaryota</taxon>
        <taxon>Metazoa</taxon>
        <taxon>Chordata</taxon>
        <taxon>Craniata</taxon>
        <taxon>Vertebrata</taxon>
        <taxon>Euteleostomi</taxon>
        <taxon>Mammalia</taxon>
        <taxon>Eutheria</taxon>
        <taxon>Euarchontoglires</taxon>
        <taxon>Glires</taxon>
        <taxon>Rodentia</taxon>
        <taxon>Myomorpha</taxon>
        <taxon>Muroidea</taxon>
        <taxon>Muridae</taxon>
        <taxon>Murinae</taxon>
        <taxon>Mus</taxon>
        <taxon>Mus</taxon>
    </lineage>
</organism>
<dbReference type="EMBL" id="KC426930">
    <property type="protein sequence ID" value="AGX24909.1"/>
    <property type="molecule type" value="mRNA"/>
</dbReference>
<dbReference type="EMBL" id="KC426931">
    <property type="protein sequence ID" value="AGX24910.1"/>
    <property type="molecule type" value="mRNA"/>
</dbReference>
<dbReference type="EMBL" id="KC426932">
    <property type="protein sequence ID" value="AGX24911.1"/>
    <property type="molecule type" value="mRNA"/>
</dbReference>
<dbReference type="EMBL" id="KC426933">
    <property type="protein sequence ID" value="AGX24912.1"/>
    <property type="molecule type" value="mRNA"/>
</dbReference>
<dbReference type="EMBL" id="KC426934">
    <property type="protein sequence ID" value="AGX24913.1"/>
    <property type="molecule type" value="mRNA"/>
</dbReference>
<dbReference type="EMBL" id="KC426935">
    <property type="protein sequence ID" value="AGX24914.1"/>
    <property type="molecule type" value="mRNA"/>
</dbReference>
<dbReference type="EMBL" id="KC426936">
    <property type="protein sequence ID" value="AGX24915.1"/>
    <property type="molecule type" value="mRNA"/>
</dbReference>
<dbReference type="EMBL" id="KC426937">
    <property type="protein sequence ID" value="AGX24916.1"/>
    <property type="molecule type" value="mRNA"/>
</dbReference>
<dbReference type="EMBL" id="KC426938">
    <property type="protein sequence ID" value="AGX24917.1"/>
    <property type="molecule type" value="mRNA"/>
</dbReference>
<dbReference type="EMBL" id="KC426939">
    <property type="protein sequence ID" value="AGX24918.1"/>
    <property type="molecule type" value="mRNA"/>
</dbReference>
<dbReference type="EMBL" id="KC426940">
    <property type="protein sequence ID" value="AGX24919.1"/>
    <property type="molecule type" value="mRNA"/>
</dbReference>
<dbReference type="EMBL" id="KC426941">
    <property type="protein sequence ID" value="AGX24920.1"/>
    <property type="molecule type" value="mRNA"/>
</dbReference>
<dbReference type="EMBL" id="KC426942">
    <property type="protein sequence ID" value="AGX24921.1"/>
    <property type="molecule type" value="mRNA"/>
</dbReference>
<dbReference type="EMBL" id="KC426943">
    <property type="protein sequence ID" value="AGX24922.1"/>
    <property type="molecule type" value="mRNA"/>
</dbReference>
<dbReference type="EMBL" id="KC426944">
    <property type="protein sequence ID" value="AGX24923.1"/>
    <property type="molecule type" value="mRNA"/>
</dbReference>
<dbReference type="EMBL" id="KC426945">
    <property type="protein sequence ID" value="AGX24924.1"/>
    <property type="molecule type" value="mRNA"/>
</dbReference>
<dbReference type="EMBL" id="AK081728">
    <property type="protein sequence ID" value="BAC38313.1"/>
    <property type="molecule type" value="mRNA"/>
</dbReference>
<dbReference type="EMBL" id="AC170806">
    <property type="status" value="NOT_ANNOTATED_CDS"/>
    <property type="molecule type" value="Genomic_DNA"/>
</dbReference>
<dbReference type="EMBL" id="CH466566">
    <property type="protein sequence ID" value="EDL21921.1"/>
    <property type="molecule type" value="Genomic_DNA"/>
</dbReference>
<dbReference type="EMBL" id="BC048787">
    <property type="protein sequence ID" value="AAH48787.1"/>
    <property type="molecule type" value="mRNA"/>
</dbReference>
<dbReference type="EMBL" id="AK220401">
    <property type="protein sequence ID" value="BAD90256.1"/>
    <property type="molecule type" value="Transcribed_RNA"/>
</dbReference>
<dbReference type="CCDS" id="CCDS22064.1">
    <molecule id="Q80VC9-1"/>
</dbReference>
<dbReference type="CCDS" id="CCDS52469.1">
    <molecule id="Q80VC9-10"/>
</dbReference>
<dbReference type="CCDS" id="CCDS85488.1">
    <molecule id="Q80VC9-5"/>
</dbReference>
<dbReference type="CCDS" id="CCDS85489.1">
    <molecule id="Q80VC9-3"/>
</dbReference>
<dbReference type="CCDS" id="CCDS85490.1">
    <molecule id="Q80VC9-4"/>
</dbReference>
<dbReference type="CCDS" id="CCDS90365.1">
    <molecule id="Q80VC9-15"/>
</dbReference>
<dbReference type="CCDS" id="CCDS90366.1">
    <molecule id="Q80VC9-7"/>
</dbReference>
<dbReference type="CCDS" id="CCDS90367.1">
    <molecule id="Q80VC9-13"/>
</dbReference>
<dbReference type="RefSeq" id="NP_001157221.1">
    <molecule id="Q80VC9-10"/>
    <property type="nucleotide sequence ID" value="NM_001163749.1"/>
</dbReference>
<dbReference type="RefSeq" id="NP_001334040.1">
    <molecule id="Q80VC9-5"/>
    <property type="nucleotide sequence ID" value="NM_001347111.1"/>
</dbReference>
<dbReference type="RefSeq" id="NP_001334041.1">
    <molecule id="Q80VC9-4"/>
    <property type="nucleotide sequence ID" value="NM_001347112.1"/>
</dbReference>
<dbReference type="RefSeq" id="NP_001334042.1">
    <molecule id="Q80VC9-3"/>
    <property type="nucleotide sequence ID" value="NM_001347113.1"/>
</dbReference>
<dbReference type="RefSeq" id="NP_001350168.1">
    <molecule id="Q80VC9-14"/>
    <property type="nucleotide sequence ID" value="NM_001363239.1"/>
</dbReference>
<dbReference type="RefSeq" id="NP_001350169.1">
    <molecule id="Q80VC9-11"/>
    <property type="nucleotide sequence ID" value="NM_001363240.1"/>
</dbReference>
<dbReference type="RefSeq" id="NP_001350170.1">
    <molecule id="Q80VC9-12"/>
    <property type="nucleotide sequence ID" value="NM_001363241.1"/>
</dbReference>
<dbReference type="RefSeq" id="NP_001350171.1">
    <molecule id="Q80VC9-17"/>
    <property type="nucleotide sequence ID" value="NM_001363242.1"/>
</dbReference>
<dbReference type="RefSeq" id="NP_001350172.1">
    <molecule id="Q80VC9-8"/>
    <property type="nucleotide sequence ID" value="NM_001363243.1"/>
</dbReference>
<dbReference type="RefSeq" id="NP_001350173.1">
    <molecule id="Q80VC9-16"/>
    <property type="nucleotide sequence ID" value="NM_001363244.1"/>
</dbReference>
<dbReference type="RefSeq" id="NP_001350174.1">
    <molecule id="Q80VC9-7"/>
    <property type="nucleotide sequence ID" value="NM_001363245.1"/>
</dbReference>
<dbReference type="RefSeq" id="NP_001350175.1">
    <molecule id="Q80VC9-15"/>
    <property type="nucleotide sequence ID" value="NM_001363246.1"/>
</dbReference>
<dbReference type="RefSeq" id="NP_001350176.1">
    <molecule id="Q80VC9-6"/>
    <property type="nucleotide sequence ID" value="NM_001363247.1"/>
</dbReference>
<dbReference type="RefSeq" id="NP_001350177.1">
    <molecule id="Q80VC9-13"/>
    <property type="nucleotide sequence ID" value="NM_001363248.1"/>
</dbReference>
<dbReference type="RefSeq" id="NP_001350178.1">
    <molecule id="Q80VC9-9"/>
    <property type="nucleotide sequence ID" value="NM_001363249.1"/>
</dbReference>
<dbReference type="RefSeq" id="NP_081447.2">
    <molecule id="Q80VC9-1"/>
    <property type="nucleotide sequence ID" value="NM_027171.3"/>
</dbReference>
<dbReference type="RefSeq" id="XP_006508937.1">
    <property type="nucleotide sequence ID" value="XM_006508874.1"/>
</dbReference>
<dbReference type="RefSeq" id="XP_006508939.1">
    <property type="nucleotide sequence ID" value="XM_006508876.1"/>
</dbReference>
<dbReference type="RefSeq" id="XP_006508941.1">
    <property type="nucleotide sequence ID" value="XM_006508878.1"/>
</dbReference>
<dbReference type="PDB" id="1UGJ">
    <property type="method" value="NMR"/>
    <property type="chains" value="A=1113-1240"/>
</dbReference>
<dbReference type="PDB" id="5LZN">
    <property type="method" value="X-ray"/>
    <property type="resolution" value="1.40 A"/>
    <property type="chains" value="A=1121-1239"/>
</dbReference>
<dbReference type="PDB" id="5M50">
    <property type="method" value="EM"/>
    <property type="resolution" value="5.30 A"/>
    <property type="chains" value="C=1121-1238"/>
</dbReference>
<dbReference type="PDB" id="5OW5">
    <property type="method" value="X-ray"/>
    <property type="resolution" value="1.70 A"/>
    <property type="chains" value="E/F=461-470"/>
</dbReference>
<dbReference type="PDB" id="7WEK">
    <property type="method" value="X-ray"/>
    <property type="resolution" value="3.21 A"/>
    <property type="chains" value="C/D=560-589"/>
</dbReference>
<dbReference type="PDBsum" id="1UGJ"/>
<dbReference type="PDBsum" id="5LZN"/>
<dbReference type="PDBsum" id="5M50"/>
<dbReference type="PDBsum" id="5OW5"/>
<dbReference type="PDBsum" id="7WEK"/>
<dbReference type="EMDB" id="EMD-4154"/>
<dbReference type="SMR" id="Q80VC9"/>
<dbReference type="BioGRID" id="213622">
    <property type="interactions" value="20"/>
</dbReference>
<dbReference type="DIP" id="DIP-52404N"/>
<dbReference type="FunCoup" id="Q80VC9">
    <property type="interactions" value="338"/>
</dbReference>
<dbReference type="IntAct" id="Q80VC9">
    <property type="interactions" value="5"/>
</dbReference>
<dbReference type="MINT" id="Q80VC9"/>
<dbReference type="STRING" id="10090.ENSMUSP00000146896"/>
<dbReference type="GlyGen" id="Q80VC9">
    <property type="glycosylation" value="5 sites, 1 N-linked glycan (1 site), 1 O-linked glycan (3 sites)"/>
</dbReference>
<dbReference type="iPTMnet" id="Q80VC9"/>
<dbReference type="PhosphoSitePlus" id="Q80VC9"/>
<dbReference type="SwissPalm" id="Q80VC9"/>
<dbReference type="PaxDb" id="10090-ENSMUSP00000125993"/>
<dbReference type="PeptideAtlas" id="Q80VC9"/>
<dbReference type="ProteomicsDB" id="265638">
    <molecule id="Q80VC9-1"/>
</dbReference>
<dbReference type="ProteomicsDB" id="265639">
    <molecule id="Q80VC9-2"/>
</dbReference>
<dbReference type="ProteomicsDB" id="265640">
    <molecule id="Q80VC9-3"/>
</dbReference>
<dbReference type="ProteomicsDB" id="265641">
    <molecule id="Q80VC9-4"/>
</dbReference>
<dbReference type="ProteomicsDB" id="265642">
    <molecule id="Q80VC9-5"/>
</dbReference>
<dbReference type="ProteomicsDB" id="265643">
    <molecule id="Q80VC9-6"/>
</dbReference>
<dbReference type="ProteomicsDB" id="265644">
    <molecule id="Q80VC9-7"/>
</dbReference>
<dbReference type="ProteomicsDB" id="265645">
    <molecule id="Q80VC9-8"/>
</dbReference>
<dbReference type="ProteomicsDB" id="265646">
    <molecule id="Q80VC9-9"/>
</dbReference>
<dbReference type="ProteomicsDB" id="265647">
    <molecule id="Q80VC9-10"/>
</dbReference>
<dbReference type="ProteomicsDB" id="265648">
    <molecule id="Q80VC9-11"/>
</dbReference>
<dbReference type="ProteomicsDB" id="265649">
    <molecule id="Q80VC9-12"/>
</dbReference>
<dbReference type="ProteomicsDB" id="265650">
    <molecule id="Q80VC9-13"/>
</dbReference>
<dbReference type="ProteomicsDB" id="265651">
    <molecule id="Q80VC9-14"/>
</dbReference>
<dbReference type="ProteomicsDB" id="265652">
    <molecule id="Q80VC9-15"/>
</dbReference>
<dbReference type="ProteomicsDB" id="265653">
    <molecule id="Q80VC9-16"/>
</dbReference>
<dbReference type="ProteomicsDB" id="265654">
    <molecule id="Q80VC9-17"/>
</dbReference>
<dbReference type="Antibodypedia" id="50549">
    <property type="antibodies" value="76 antibodies from 18 providers"/>
</dbReference>
<dbReference type="DNASU" id="69697"/>
<dbReference type="Ensembl" id="ENSMUST00000057028.15">
    <molecule id="Q80VC9-1"/>
    <property type="protein sequence ID" value="ENSMUSP00000058958.8"/>
    <property type="gene ID" value="ENSMUSG00000044433.17"/>
</dbReference>
<dbReference type="Ensembl" id="ENSMUST00000171962.3">
    <molecule id="Q80VC9-10"/>
    <property type="protein sequence ID" value="ENSMUSP00000125993.2"/>
    <property type="gene ID" value="ENSMUSG00000044433.17"/>
</dbReference>
<dbReference type="Ensembl" id="ENSMUST00000207077.2">
    <molecule id="Q80VC9-4"/>
    <property type="protein sequence ID" value="ENSMUSP00000146852.2"/>
    <property type="gene ID" value="ENSMUSG00000044433.17"/>
</dbReference>
<dbReference type="Ensembl" id="ENSMUST00000207432.2">
    <molecule id="Q80VC9-5"/>
    <property type="protein sequence ID" value="ENSMUSP00000146896.2"/>
    <property type="gene ID" value="ENSMUSG00000044433.17"/>
</dbReference>
<dbReference type="Ensembl" id="ENSMUST00000207533.2">
    <molecule id="Q80VC9-7"/>
    <property type="protein sequence ID" value="ENSMUSP00000147209.2"/>
    <property type="gene ID" value="ENSMUSG00000044433.17"/>
</dbReference>
<dbReference type="Ensembl" id="ENSMUST00000207712.2">
    <molecule id="Q80VC9-13"/>
    <property type="protein sequence ID" value="ENSMUSP00000146565.2"/>
    <property type="gene ID" value="ENSMUSG00000044433.17"/>
</dbReference>
<dbReference type="Ensembl" id="ENSMUST00000207970.2">
    <molecule id="Q80VC9-3"/>
    <property type="protein sequence ID" value="ENSMUSP00000146772.2"/>
    <property type="gene ID" value="ENSMUSG00000044433.17"/>
</dbReference>
<dbReference type="Ensembl" id="ENSMUST00000208240.2">
    <molecule id="Q80VC9-15"/>
    <property type="protein sequence ID" value="ENSMUSP00000146359.2"/>
    <property type="gene ID" value="ENSMUSG00000044433.17"/>
</dbReference>
<dbReference type="GeneID" id="69697"/>
<dbReference type="KEGG" id="mmu:69697"/>
<dbReference type="UCSC" id="uc009krw.2">
    <molecule id="Q80VC9-1"/>
    <property type="organism name" value="mouse"/>
</dbReference>
<dbReference type="UCSC" id="uc012fym.1">
    <property type="organism name" value="mouse"/>
</dbReference>
<dbReference type="UCSC" id="uc033jds.1">
    <property type="organism name" value="mouse"/>
</dbReference>
<dbReference type="UCSC" id="uc033jdu.1">
    <property type="organism name" value="mouse"/>
</dbReference>
<dbReference type="UCSC" id="uc033jdv.1">
    <property type="organism name" value="mouse"/>
</dbReference>
<dbReference type="UCSC" id="uc033jdy.1">
    <property type="organism name" value="mouse"/>
</dbReference>
<dbReference type="UCSC" id="uc033jec.1">
    <property type="organism name" value="mouse"/>
</dbReference>
<dbReference type="UCSC" id="uc033jed.1">
    <property type="organism name" value="mouse"/>
</dbReference>
<dbReference type="AGR" id="MGI:1916947"/>
<dbReference type="CTD" id="57662"/>
<dbReference type="MGI" id="MGI:1916947">
    <property type="gene designation" value="Camsap3"/>
</dbReference>
<dbReference type="VEuPathDB" id="HostDB:ENSMUSG00000044433"/>
<dbReference type="eggNOG" id="KOG3654">
    <property type="taxonomic scope" value="Eukaryota"/>
</dbReference>
<dbReference type="GeneTree" id="ENSGT00950000182975"/>
<dbReference type="HOGENOM" id="CLU_004833_1_0_1"/>
<dbReference type="InParanoid" id="Q80VC9"/>
<dbReference type="OMA" id="HQPILMX"/>
<dbReference type="PhylomeDB" id="Q80VC9"/>
<dbReference type="TreeFam" id="TF315529"/>
<dbReference type="BioGRID-ORCS" id="69697">
    <property type="hits" value="6 hits in 76 CRISPR screens"/>
</dbReference>
<dbReference type="CD-CODE" id="CE726F99">
    <property type="entry name" value="Postsynaptic density"/>
</dbReference>
<dbReference type="EvolutionaryTrace" id="Q80VC9"/>
<dbReference type="PRO" id="PR:Q80VC9"/>
<dbReference type="Proteomes" id="UP000000589">
    <property type="component" value="Chromosome 8"/>
</dbReference>
<dbReference type="RNAct" id="Q80VC9">
    <property type="molecule type" value="protein"/>
</dbReference>
<dbReference type="Bgee" id="ENSMUSG00000044433">
    <property type="expression patterns" value="Expressed in secondary oocyte and 182 other cell types or tissues"/>
</dbReference>
<dbReference type="ExpressionAtlas" id="Q80VC9">
    <property type="expression patterns" value="baseline and differential"/>
</dbReference>
<dbReference type="GO" id="GO:0005930">
    <property type="term" value="C:axoneme"/>
    <property type="evidence" value="ECO:0000314"/>
    <property type="project" value="UniProtKB"/>
</dbReference>
<dbReference type="GO" id="GO:0005813">
    <property type="term" value="C:centrosome"/>
    <property type="evidence" value="ECO:0007669"/>
    <property type="project" value="Ensembl"/>
</dbReference>
<dbReference type="GO" id="GO:0036064">
    <property type="term" value="C:ciliary basal body"/>
    <property type="evidence" value="ECO:0000314"/>
    <property type="project" value="UniProtKB"/>
</dbReference>
<dbReference type="GO" id="GO:0005737">
    <property type="term" value="C:cytoplasm"/>
    <property type="evidence" value="ECO:0000314"/>
    <property type="project" value="UniProtKB"/>
</dbReference>
<dbReference type="GO" id="GO:0015630">
    <property type="term" value="C:microtubule cytoskeleton"/>
    <property type="evidence" value="ECO:0000314"/>
    <property type="project" value="MGI"/>
</dbReference>
<dbReference type="GO" id="GO:0036449">
    <property type="term" value="C:microtubule minus-end"/>
    <property type="evidence" value="ECO:0000314"/>
    <property type="project" value="UniProtKB"/>
</dbReference>
<dbReference type="GO" id="GO:0031514">
    <property type="term" value="C:motile cilium"/>
    <property type="evidence" value="ECO:0000314"/>
    <property type="project" value="UniProtKB"/>
</dbReference>
<dbReference type="GO" id="GO:0005915">
    <property type="term" value="C:zonula adherens"/>
    <property type="evidence" value="ECO:0000250"/>
    <property type="project" value="UniProtKB"/>
</dbReference>
<dbReference type="GO" id="GO:0051015">
    <property type="term" value="F:actin filament binding"/>
    <property type="evidence" value="ECO:0000250"/>
    <property type="project" value="UniProtKB"/>
</dbReference>
<dbReference type="GO" id="GO:0005516">
    <property type="term" value="F:calmodulin binding"/>
    <property type="evidence" value="ECO:0007669"/>
    <property type="project" value="InterPro"/>
</dbReference>
<dbReference type="GO" id="GO:0051011">
    <property type="term" value="F:microtubule minus-end binding"/>
    <property type="evidence" value="ECO:0000314"/>
    <property type="project" value="UniProtKB"/>
</dbReference>
<dbReference type="GO" id="GO:0030507">
    <property type="term" value="F:spectrin binding"/>
    <property type="evidence" value="ECO:0007669"/>
    <property type="project" value="InterPro"/>
</dbReference>
<dbReference type="GO" id="GO:0003341">
    <property type="term" value="P:cilium movement"/>
    <property type="evidence" value="ECO:0000315"/>
    <property type="project" value="UniProtKB"/>
</dbReference>
<dbReference type="GO" id="GO:0009792">
    <property type="term" value="P:embryo development ending in birth or egg hatching"/>
    <property type="evidence" value="ECO:0000314"/>
    <property type="project" value="UniProtKB"/>
</dbReference>
<dbReference type="GO" id="GO:0090136">
    <property type="term" value="P:epithelial cell-cell adhesion"/>
    <property type="evidence" value="ECO:0000250"/>
    <property type="project" value="UniProtKB"/>
</dbReference>
<dbReference type="GO" id="GO:0045198">
    <property type="term" value="P:establishment of epithelial cell apical/basal polarity"/>
    <property type="evidence" value="ECO:0000315"/>
    <property type="project" value="UniProtKB"/>
</dbReference>
<dbReference type="GO" id="GO:0030951">
    <property type="term" value="P:establishment or maintenance of microtubule cytoskeleton polarity"/>
    <property type="evidence" value="ECO:0000315"/>
    <property type="project" value="UniProtKB"/>
</dbReference>
<dbReference type="GO" id="GO:0001701">
    <property type="term" value="P:in utero embryonic development"/>
    <property type="evidence" value="ECO:0000315"/>
    <property type="project" value="MGI"/>
</dbReference>
<dbReference type="GO" id="GO:0034453">
    <property type="term" value="P:microtubule anchoring"/>
    <property type="evidence" value="ECO:0000250"/>
    <property type="project" value="UniProtKB"/>
</dbReference>
<dbReference type="GO" id="GO:0000226">
    <property type="term" value="P:microtubule cytoskeleton organization"/>
    <property type="evidence" value="ECO:0000314"/>
    <property type="project" value="UniProtKB"/>
</dbReference>
<dbReference type="GO" id="GO:0031175">
    <property type="term" value="P:neuron projection development"/>
    <property type="evidence" value="ECO:0007669"/>
    <property type="project" value="InterPro"/>
</dbReference>
<dbReference type="GO" id="GO:0098840">
    <property type="term" value="P:protein transport along microtubule"/>
    <property type="evidence" value="ECO:0000314"/>
    <property type="project" value="UniProtKB"/>
</dbReference>
<dbReference type="GO" id="GO:0030334">
    <property type="term" value="P:regulation of cell migration"/>
    <property type="evidence" value="ECO:0000250"/>
    <property type="project" value="UniProtKB"/>
</dbReference>
<dbReference type="GO" id="GO:0051893">
    <property type="term" value="P:regulation of focal adhesion assembly"/>
    <property type="evidence" value="ECO:0000250"/>
    <property type="project" value="UniProtKB"/>
</dbReference>
<dbReference type="GO" id="GO:1903358">
    <property type="term" value="P:regulation of Golgi organization"/>
    <property type="evidence" value="ECO:0000250"/>
    <property type="project" value="UniProtKB"/>
</dbReference>
<dbReference type="GO" id="GO:0070507">
    <property type="term" value="P:regulation of microtubule cytoskeleton organization"/>
    <property type="evidence" value="ECO:0000250"/>
    <property type="project" value="UniProtKB"/>
</dbReference>
<dbReference type="GO" id="GO:0031113">
    <property type="term" value="P:regulation of microtubule polymerization"/>
    <property type="evidence" value="ECO:0000314"/>
    <property type="project" value="UniProtKB"/>
</dbReference>
<dbReference type="GO" id="GO:0033043">
    <property type="term" value="P:regulation of organelle organization"/>
    <property type="evidence" value="ECO:0000316"/>
    <property type="project" value="UniProtKB"/>
</dbReference>
<dbReference type="GO" id="GO:0045218">
    <property type="term" value="P:zonula adherens maintenance"/>
    <property type="evidence" value="ECO:0000250"/>
    <property type="project" value="UniProtKB"/>
</dbReference>
<dbReference type="FunFam" id="3.10.20.360:FF:000001">
    <property type="entry name" value="Calmodulin-regulated spectrin-associated protein 3 isoform 2"/>
    <property type="match status" value="1"/>
</dbReference>
<dbReference type="Gene3D" id="3.10.20.360">
    <property type="entry name" value="CKK domain"/>
    <property type="match status" value="1"/>
</dbReference>
<dbReference type="InterPro" id="IPR032940">
    <property type="entry name" value="CAMSAP"/>
</dbReference>
<dbReference type="InterPro" id="IPR022613">
    <property type="entry name" value="CAMSAP-like_CH_dom"/>
</dbReference>
<dbReference type="InterPro" id="IPR031372">
    <property type="entry name" value="CAMSAP_CC1"/>
</dbReference>
<dbReference type="InterPro" id="IPR001715">
    <property type="entry name" value="CH_dom"/>
</dbReference>
<dbReference type="InterPro" id="IPR036872">
    <property type="entry name" value="CH_dom_sf"/>
</dbReference>
<dbReference type="InterPro" id="IPR038209">
    <property type="entry name" value="CKK_dom_sf"/>
</dbReference>
<dbReference type="InterPro" id="IPR014797">
    <property type="entry name" value="CKK_domain"/>
</dbReference>
<dbReference type="InterPro" id="IPR011033">
    <property type="entry name" value="PRC_barrel-like_sf"/>
</dbReference>
<dbReference type="PANTHER" id="PTHR21595:SF2">
    <property type="entry name" value="CALMODULIN-REGULATED SPECTRIN-ASSOCIATED PROTEIN 3"/>
    <property type="match status" value="1"/>
</dbReference>
<dbReference type="PANTHER" id="PTHR21595">
    <property type="entry name" value="PATRONIN"/>
    <property type="match status" value="1"/>
</dbReference>
<dbReference type="Pfam" id="PF17095">
    <property type="entry name" value="CAMSAP_CC1"/>
    <property type="match status" value="1"/>
</dbReference>
<dbReference type="Pfam" id="PF11971">
    <property type="entry name" value="CAMSAP_CH"/>
    <property type="match status" value="1"/>
</dbReference>
<dbReference type="Pfam" id="PF08683">
    <property type="entry name" value="CAMSAP_CKK"/>
    <property type="match status" value="1"/>
</dbReference>
<dbReference type="SMART" id="SM01051">
    <property type="entry name" value="CAMSAP_CKK"/>
    <property type="match status" value="1"/>
</dbReference>
<dbReference type="SUPFAM" id="SSF47576">
    <property type="entry name" value="Calponin-homology domain, CH-domain"/>
    <property type="match status" value="1"/>
</dbReference>
<dbReference type="SUPFAM" id="SSF50346">
    <property type="entry name" value="PRC-barrel domain"/>
    <property type="match status" value="1"/>
</dbReference>
<dbReference type="PROSITE" id="PS50021">
    <property type="entry name" value="CH"/>
    <property type="match status" value="1"/>
</dbReference>
<dbReference type="PROSITE" id="PS51508">
    <property type="entry name" value="CKK"/>
    <property type="match status" value="1"/>
</dbReference>
<reference key="1">
    <citation type="journal article" date="2013" name="Biol. Open">
        <title>Marshalin, a microtubule minus-end binding protein, regulates cytoskeletal structure in the organ of Corti.</title>
        <authorList>
            <person name="Zheng J."/>
            <person name="Furness D."/>
            <person name="Duan C."/>
            <person name="Miller K.K."/>
            <person name="Edge R.M."/>
            <person name="Chen J."/>
            <person name="Homma K."/>
            <person name="Hackney C.M."/>
            <person name="Dallos P."/>
            <person name="Cheatham M.A."/>
        </authorList>
    </citation>
    <scope>NUCLEOTIDE SEQUENCE [MRNA] (ISOFORMS 1; 3; 4; 5; 6; 7; 8; 9; 10; 11; 12; 13; 14; 15; 16 AND 17)</scope>
    <scope>SUBCELLULAR LOCATION</scope>
    <scope>TISSUE SPECIFICITY</scope>
    <source>
        <tissue>Cochlea</tissue>
    </source>
</reference>
<reference key="2">
    <citation type="journal article" date="2005" name="Science">
        <title>The transcriptional landscape of the mammalian genome.</title>
        <authorList>
            <person name="Carninci P."/>
            <person name="Kasukawa T."/>
            <person name="Katayama S."/>
            <person name="Gough J."/>
            <person name="Frith M.C."/>
            <person name="Maeda N."/>
            <person name="Oyama R."/>
            <person name="Ravasi T."/>
            <person name="Lenhard B."/>
            <person name="Wells C."/>
            <person name="Kodzius R."/>
            <person name="Shimokawa K."/>
            <person name="Bajic V.B."/>
            <person name="Brenner S.E."/>
            <person name="Batalov S."/>
            <person name="Forrest A.R."/>
            <person name="Zavolan M."/>
            <person name="Davis M.J."/>
            <person name="Wilming L.G."/>
            <person name="Aidinis V."/>
            <person name="Allen J.E."/>
            <person name="Ambesi-Impiombato A."/>
            <person name="Apweiler R."/>
            <person name="Aturaliya R.N."/>
            <person name="Bailey T.L."/>
            <person name="Bansal M."/>
            <person name="Baxter L."/>
            <person name="Beisel K.W."/>
            <person name="Bersano T."/>
            <person name="Bono H."/>
            <person name="Chalk A.M."/>
            <person name="Chiu K.P."/>
            <person name="Choudhary V."/>
            <person name="Christoffels A."/>
            <person name="Clutterbuck D.R."/>
            <person name="Crowe M.L."/>
            <person name="Dalla E."/>
            <person name="Dalrymple B.P."/>
            <person name="de Bono B."/>
            <person name="Della Gatta G."/>
            <person name="di Bernardo D."/>
            <person name="Down T."/>
            <person name="Engstrom P."/>
            <person name="Fagiolini M."/>
            <person name="Faulkner G."/>
            <person name="Fletcher C.F."/>
            <person name="Fukushima T."/>
            <person name="Furuno M."/>
            <person name="Futaki S."/>
            <person name="Gariboldi M."/>
            <person name="Georgii-Hemming P."/>
            <person name="Gingeras T.R."/>
            <person name="Gojobori T."/>
            <person name="Green R.E."/>
            <person name="Gustincich S."/>
            <person name="Harbers M."/>
            <person name="Hayashi Y."/>
            <person name="Hensch T.K."/>
            <person name="Hirokawa N."/>
            <person name="Hill D."/>
            <person name="Huminiecki L."/>
            <person name="Iacono M."/>
            <person name="Ikeo K."/>
            <person name="Iwama A."/>
            <person name="Ishikawa T."/>
            <person name="Jakt M."/>
            <person name="Kanapin A."/>
            <person name="Katoh M."/>
            <person name="Kawasawa Y."/>
            <person name="Kelso J."/>
            <person name="Kitamura H."/>
            <person name="Kitano H."/>
            <person name="Kollias G."/>
            <person name="Krishnan S.P."/>
            <person name="Kruger A."/>
            <person name="Kummerfeld S.K."/>
            <person name="Kurochkin I.V."/>
            <person name="Lareau L.F."/>
            <person name="Lazarevic D."/>
            <person name="Lipovich L."/>
            <person name="Liu J."/>
            <person name="Liuni S."/>
            <person name="McWilliam S."/>
            <person name="Madan Babu M."/>
            <person name="Madera M."/>
            <person name="Marchionni L."/>
            <person name="Matsuda H."/>
            <person name="Matsuzawa S."/>
            <person name="Miki H."/>
            <person name="Mignone F."/>
            <person name="Miyake S."/>
            <person name="Morris K."/>
            <person name="Mottagui-Tabar S."/>
            <person name="Mulder N."/>
            <person name="Nakano N."/>
            <person name="Nakauchi H."/>
            <person name="Ng P."/>
            <person name="Nilsson R."/>
            <person name="Nishiguchi S."/>
            <person name="Nishikawa S."/>
            <person name="Nori F."/>
            <person name="Ohara O."/>
            <person name="Okazaki Y."/>
            <person name="Orlando V."/>
            <person name="Pang K.C."/>
            <person name="Pavan W.J."/>
            <person name="Pavesi G."/>
            <person name="Pesole G."/>
            <person name="Petrovsky N."/>
            <person name="Piazza S."/>
            <person name="Reed J."/>
            <person name="Reid J.F."/>
            <person name="Ring B.Z."/>
            <person name="Ringwald M."/>
            <person name="Rost B."/>
            <person name="Ruan Y."/>
            <person name="Salzberg S.L."/>
            <person name="Sandelin A."/>
            <person name="Schneider C."/>
            <person name="Schoenbach C."/>
            <person name="Sekiguchi K."/>
            <person name="Semple C.A."/>
            <person name="Seno S."/>
            <person name="Sessa L."/>
            <person name="Sheng Y."/>
            <person name="Shibata Y."/>
            <person name="Shimada H."/>
            <person name="Shimada K."/>
            <person name="Silva D."/>
            <person name="Sinclair B."/>
            <person name="Sperling S."/>
            <person name="Stupka E."/>
            <person name="Sugiura K."/>
            <person name="Sultana R."/>
            <person name="Takenaka Y."/>
            <person name="Taki K."/>
            <person name="Tammoja K."/>
            <person name="Tan S.L."/>
            <person name="Tang S."/>
            <person name="Taylor M.S."/>
            <person name="Tegner J."/>
            <person name="Teichmann S.A."/>
            <person name="Ueda H.R."/>
            <person name="van Nimwegen E."/>
            <person name="Verardo R."/>
            <person name="Wei C.L."/>
            <person name="Yagi K."/>
            <person name="Yamanishi H."/>
            <person name="Zabarovsky E."/>
            <person name="Zhu S."/>
            <person name="Zimmer A."/>
            <person name="Hide W."/>
            <person name="Bult C."/>
            <person name="Grimmond S.M."/>
            <person name="Teasdale R.D."/>
            <person name="Liu E.T."/>
            <person name="Brusic V."/>
            <person name="Quackenbush J."/>
            <person name="Wahlestedt C."/>
            <person name="Mattick J.S."/>
            <person name="Hume D.A."/>
            <person name="Kai C."/>
            <person name="Sasaki D."/>
            <person name="Tomaru Y."/>
            <person name="Fukuda S."/>
            <person name="Kanamori-Katayama M."/>
            <person name="Suzuki M."/>
            <person name="Aoki J."/>
            <person name="Arakawa T."/>
            <person name="Iida J."/>
            <person name="Imamura K."/>
            <person name="Itoh M."/>
            <person name="Kato T."/>
            <person name="Kawaji H."/>
            <person name="Kawagashira N."/>
            <person name="Kawashima T."/>
            <person name="Kojima M."/>
            <person name="Kondo S."/>
            <person name="Konno H."/>
            <person name="Nakano K."/>
            <person name="Ninomiya N."/>
            <person name="Nishio T."/>
            <person name="Okada M."/>
            <person name="Plessy C."/>
            <person name="Shibata K."/>
            <person name="Shiraki T."/>
            <person name="Suzuki S."/>
            <person name="Tagami M."/>
            <person name="Waki K."/>
            <person name="Watahiki A."/>
            <person name="Okamura-Oho Y."/>
            <person name="Suzuki H."/>
            <person name="Kawai J."/>
            <person name="Hayashizaki Y."/>
        </authorList>
    </citation>
    <scope>NUCLEOTIDE SEQUENCE [LARGE SCALE MRNA] (ISOFORM 1)</scope>
    <source>
        <strain>C57BL/6J</strain>
        <tissue>Head</tissue>
    </source>
</reference>
<reference key="3">
    <citation type="journal article" date="2009" name="PLoS Biol.">
        <title>Lineage-specific biology revealed by a finished genome assembly of the mouse.</title>
        <authorList>
            <person name="Church D.M."/>
            <person name="Goodstadt L."/>
            <person name="Hillier L.W."/>
            <person name="Zody M.C."/>
            <person name="Goldstein S."/>
            <person name="She X."/>
            <person name="Bult C.J."/>
            <person name="Agarwala R."/>
            <person name="Cherry J.L."/>
            <person name="DiCuccio M."/>
            <person name="Hlavina W."/>
            <person name="Kapustin Y."/>
            <person name="Meric P."/>
            <person name="Maglott D."/>
            <person name="Birtle Z."/>
            <person name="Marques A.C."/>
            <person name="Graves T."/>
            <person name="Zhou S."/>
            <person name="Teague B."/>
            <person name="Potamousis K."/>
            <person name="Churas C."/>
            <person name="Place M."/>
            <person name="Herschleb J."/>
            <person name="Runnheim R."/>
            <person name="Forrest D."/>
            <person name="Amos-Landgraf J."/>
            <person name="Schwartz D.C."/>
            <person name="Cheng Z."/>
            <person name="Lindblad-Toh K."/>
            <person name="Eichler E.E."/>
            <person name="Ponting C.P."/>
        </authorList>
    </citation>
    <scope>NUCLEOTIDE SEQUENCE [LARGE SCALE GENOMIC DNA]</scope>
    <source>
        <strain>C57BL/6J</strain>
    </source>
</reference>
<reference key="4">
    <citation type="submission" date="2005-07" db="EMBL/GenBank/DDBJ databases">
        <authorList>
            <person name="Mural R.J."/>
            <person name="Adams M.D."/>
            <person name="Myers E.W."/>
            <person name="Smith H.O."/>
            <person name="Venter J.C."/>
        </authorList>
    </citation>
    <scope>NUCLEOTIDE SEQUENCE [LARGE SCALE GENOMIC DNA]</scope>
</reference>
<reference key="5">
    <citation type="journal article" date="2004" name="Genome Res.">
        <title>The status, quality, and expansion of the NIH full-length cDNA project: the Mammalian Gene Collection (MGC).</title>
        <authorList>
            <consortium name="The MGC Project Team"/>
        </authorList>
    </citation>
    <scope>NUCLEOTIDE SEQUENCE [LARGE SCALE MRNA] (ISOFORM 1)</scope>
    <source>
        <strain>FVB/N-3</strain>
        <tissue>Mammary tumor</tissue>
    </source>
</reference>
<reference key="6">
    <citation type="submission" date="2005-02" db="EMBL/GenBank/DDBJ databases">
        <title>Prediction of the coding sequences of mouse homologues of KIAA gene. The complete nucleotide sequences of mouse KIAA-homologous cDNAs identified by screening of terminal sequences of cDNA clones randomly sampled from size-fractionated libraries.</title>
        <authorList>
            <person name="Okazaki N."/>
            <person name="Kikuno R.F."/>
            <person name="Ohara R."/>
            <person name="Inamoto S."/>
            <person name="Nagase T."/>
            <person name="Ohara O."/>
            <person name="Koga H."/>
        </authorList>
    </citation>
    <scope>NUCLEOTIDE SEQUENCE [LARGE SCALE MRNA] OF 198-1252 (ISOFORM 2)</scope>
    <source>
        <tissue>Fetal brain</tissue>
    </source>
</reference>
<reference key="7">
    <citation type="submission" date="2009-01" db="UniProtKB">
        <authorList>
            <person name="Lubec G."/>
            <person name="Sunyer B."/>
            <person name="Chen W.-Q."/>
        </authorList>
    </citation>
    <scope>PROTEIN SEQUENCE OF 704-713</scope>
    <scope>IDENTIFICATION BY MASS SPECTROMETRY</scope>
    <source>
        <strain>OF1</strain>
        <tissue>Hippocampus</tissue>
    </source>
</reference>
<reference key="8">
    <citation type="journal article" date="2010" name="Cell">
        <title>A tissue-specific atlas of mouse protein phosphorylation and expression.</title>
        <authorList>
            <person name="Huttlin E.L."/>
            <person name="Jedrychowski M.P."/>
            <person name="Elias J.E."/>
            <person name="Goswami T."/>
            <person name="Rad R."/>
            <person name="Beausoleil S.A."/>
            <person name="Villen J."/>
            <person name="Haas W."/>
            <person name="Sowa M.E."/>
            <person name="Gygi S.P."/>
        </authorList>
    </citation>
    <scope>PHOSPHORYLATION [LARGE SCALE ANALYSIS] AT SER-193; SER-351; THR-797; SER-812 AND SER-881</scope>
    <scope>IDENTIFICATION BY MASS SPECTROMETRY [LARGE SCALE ANALYSIS]</scope>
    <source>
        <tissue>Brain</tissue>
        <tissue>Kidney</tissue>
        <tissue>Liver</tissue>
        <tissue>Lung</tissue>
        <tissue>Pancreas</tissue>
        <tissue>Testis</tissue>
    </source>
</reference>
<reference key="9">
    <citation type="journal article" date="2012" name="Proc. Natl. Acad. Sci. U.S.A.">
        <title>Nezha/CAMSAP3 and CAMSAP2 cooperate in epithelial-specific organization of noncentrosomal microtubules.</title>
        <authorList>
            <person name="Tanaka N."/>
            <person name="Meng W."/>
            <person name="Nagae S."/>
            <person name="Takeichi M."/>
        </authorList>
    </citation>
    <scope>FUNCTION</scope>
    <scope>INTERACTION WITH CAMSAP2</scope>
</reference>
<reference key="10">
    <citation type="journal article" date="2014" name="Proc. Natl. Acad. Sci. U.S.A.">
        <title>Regulation of microtubule minus-end dynamics by CAMSAPs and Patronin.</title>
        <authorList>
            <person name="Hendershott M.C."/>
            <person name="Vale R.D."/>
        </authorList>
    </citation>
    <scope>FUNCTION</scope>
    <scope>SUBCELLULAR LOCATION</scope>
</reference>
<reference key="11">
    <citation type="journal article" date="2016" name="Proc. Natl. Acad. Sci. U.S.A.">
        <title>CAMSAP3 orients the apical-to-basal polarity of microtubule arrays in epithelial cells.</title>
        <authorList>
            <person name="Toya M."/>
            <person name="Kobayashi S."/>
            <person name="Kawasaki M."/>
            <person name="Shioi G."/>
            <person name="Kaneko M."/>
            <person name="Ishiuchi T."/>
            <person name="Misaki K."/>
            <person name="Meng W."/>
            <person name="Takeichi M."/>
        </authorList>
    </citation>
    <scope>FUNCTION</scope>
    <scope>SUBCELLULAR LOCATION</scope>
    <scope>DISRUPTION PHENOTYPE</scope>
    <scope>MUTAGENESIS OF 608-LEU--ARG-612</scope>
</reference>
<reference key="12">
    <citation type="journal article" date="2016" name="Sci. Rep.">
        <title>Cadherin 23-C regulates microtubule networks by modifying CAMSAP3's function.</title>
        <authorList>
            <person name="Takahashi S."/>
            <person name="Mui V.J."/>
            <person name="Rosenberg S.K."/>
            <person name="Homma K."/>
            <person name="Cheatham M.A."/>
            <person name="Zheng J."/>
        </authorList>
    </citation>
    <scope>INTERACTION WITH CDH23</scope>
</reference>
<reference key="13">
    <citation type="journal article" date="2017" name="Science">
        <title>A microtubule-organizing center directing intracellular transport in the early mouse embryo.</title>
        <authorList>
            <person name="Zenker J."/>
            <person name="White M.D."/>
            <person name="Templin R.M."/>
            <person name="Parton R.G."/>
            <person name="Thorn-Seshold O."/>
            <person name="Bissiere S."/>
            <person name="Plachta N."/>
        </authorList>
    </citation>
    <scope>FUNCTION</scope>
    <scope>SUBCELLULAR LOCATION</scope>
</reference>
<reference key="14">
    <citation type="journal article" date="2019" name="Nature">
        <title>The centrosome protein AKNA regulates neurogenesis via microtubule organization.</title>
        <authorList>
            <person name="Camargo Ortega G."/>
            <person name="Falk S."/>
            <person name="Johansson P.A."/>
            <person name="Peyre E."/>
            <person name="Broix L."/>
            <person name="Sahu S.K."/>
            <person name="Hirst W."/>
            <person name="Schlichthaerle T."/>
            <person name="De Juan Romero C."/>
            <person name="Draganova K."/>
            <person name="Vinopal S."/>
            <person name="Chinnappa K."/>
            <person name="Gavranovic A."/>
            <person name="Karakaya T."/>
            <person name="Steininger T."/>
            <person name="Merl-Pham J."/>
            <person name="Feederle R."/>
            <person name="Shao W."/>
            <person name="Shi S.H."/>
            <person name="Hauck S.M."/>
            <person name="Jungmann R."/>
            <person name="Bradke F."/>
            <person name="Borrell V."/>
            <person name="Geerlof A."/>
            <person name="Reber S."/>
            <person name="Tiwari V.K."/>
            <person name="Huttner W.B."/>
            <person name="Wilsch-Braeuninger M."/>
            <person name="Nguyen L."/>
            <person name="Goetz M."/>
        </authorList>
    </citation>
    <scope>INTERACTION WITH AKNA</scope>
</reference>
<reference key="15">
    <citation type="journal article" date="2020" name="Proc. Natl. Acad. Sci. U.S.A.">
        <title>CAMSAP3 facilitates basal body polarity and the formation of the central pair of microtubules in motile cilia.</title>
        <authorList>
            <person name="Robinson A.M."/>
            <person name="Takahashi S."/>
            <person name="Brotslaw E.J."/>
            <person name="Ahmad A."/>
            <person name="Ferrer E."/>
            <person name="Procissi D."/>
            <person name="Richter C.P."/>
            <person name="Cheatham M.A."/>
            <person name="Mitchell B.J."/>
            <person name="Zheng J."/>
        </authorList>
    </citation>
    <scope>FUNCTION</scope>
    <scope>SUBCELLULAR LOCATION</scope>
    <scope>TISSUE SPECIFICITY</scope>
    <scope>DISRUPTION PHENOTYPE</scope>
</reference>
<reference key="16">
    <citation type="submission" date="2003-06" db="PDB data bank">
        <title>Solution structure of a murine hypothetical protein from RIKEN cDNA 2310057j16.</title>
        <authorList>
            <consortium name="RIKEN structural genomics initiative (RSGI)"/>
        </authorList>
    </citation>
    <scope>STRUCTURE BY NMR OF 1112-1240</scope>
</reference>
<proteinExistence type="evidence at protein level"/>
<accession>Q80VC9</accession>
<accession>E9Q5B0</accession>
<accession>Q5DTW9</accession>
<accession>Q8BUZ0</accession>
<accession>U5LGR7</accession>
<accession>U5LGS1</accession>
<accession>U5LGS5</accession>
<accession>U5LGT0</accession>
<accession>U5LHT8</accession>
<accession>U5LHU4</accession>
<accession>U5LHW1</accession>
<accession>U5LHW4</accession>
<accession>U5LHW9</accession>
<accession>U5LK15</accession>
<accession>U5LK19</accession>
<accession>U5LK24</accession>
<accession>U5LK70</accession>
<accession>U5LK74</accession>
<accession>U5LK79</accession>
<feature type="chain" id="PRO_0000050800" description="Calmodulin-regulated spectrin-associated protein 3">
    <location>
        <begin position="1"/>
        <end position="1252"/>
    </location>
</feature>
<feature type="domain" description="Calponin-homology (CH)" evidence="3">
    <location>
        <begin position="203"/>
        <end position="312"/>
    </location>
</feature>
<feature type="domain" description="CKK" evidence="4">
    <location>
        <begin position="1112"/>
        <end position="1246"/>
    </location>
</feature>
<feature type="region of interest" description="Disordered" evidence="5">
    <location>
        <begin position="183"/>
        <end position="205"/>
    </location>
</feature>
<feature type="region of interest" description="Disordered" evidence="5">
    <location>
        <begin position="331"/>
        <end position="385"/>
    </location>
</feature>
<feature type="region of interest" description="Disordered" evidence="5">
    <location>
        <begin position="429"/>
        <end position="457"/>
    </location>
</feature>
<feature type="region of interest" description="Disordered" evidence="5">
    <location>
        <begin position="479"/>
        <end position="604"/>
    </location>
</feature>
<feature type="region of interest" description="Disordered" evidence="5">
    <location>
        <begin position="638"/>
        <end position="697"/>
    </location>
</feature>
<feature type="region of interest" description="Disordered" evidence="5">
    <location>
        <begin position="712"/>
        <end position="935"/>
    </location>
</feature>
<feature type="region of interest" description="Disordered" evidence="5">
    <location>
        <begin position="962"/>
        <end position="981"/>
    </location>
</feature>
<feature type="region of interest" description="Disordered" evidence="5">
    <location>
        <begin position="996"/>
        <end position="1030"/>
    </location>
</feature>
<feature type="region of interest" description="Disordered" evidence="5">
    <location>
        <begin position="1063"/>
        <end position="1114"/>
    </location>
</feature>
<feature type="coiled-coil region" evidence="2">
    <location>
        <begin position="595"/>
        <end position="629"/>
    </location>
</feature>
<feature type="coiled-coil region" evidence="2">
    <location>
        <begin position="696"/>
        <end position="727"/>
    </location>
</feature>
<feature type="coiled-coil region" evidence="2">
    <location>
        <begin position="896"/>
        <end position="943"/>
    </location>
</feature>
<feature type="compositionally biased region" description="Polar residues" evidence="5">
    <location>
        <begin position="335"/>
        <end position="353"/>
    </location>
</feature>
<feature type="compositionally biased region" description="Low complexity" evidence="5">
    <location>
        <begin position="359"/>
        <end position="373"/>
    </location>
</feature>
<feature type="compositionally biased region" description="Polar residues" evidence="5">
    <location>
        <begin position="374"/>
        <end position="383"/>
    </location>
</feature>
<feature type="compositionally biased region" description="Polar residues" evidence="5">
    <location>
        <begin position="441"/>
        <end position="450"/>
    </location>
</feature>
<feature type="compositionally biased region" description="Polar residues" evidence="5">
    <location>
        <begin position="525"/>
        <end position="534"/>
    </location>
</feature>
<feature type="compositionally biased region" description="Basic and acidic residues" evidence="5">
    <location>
        <begin position="569"/>
        <end position="580"/>
    </location>
</feature>
<feature type="compositionally biased region" description="Pro residues" evidence="5">
    <location>
        <begin position="729"/>
        <end position="739"/>
    </location>
</feature>
<feature type="compositionally biased region" description="Low complexity" evidence="5">
    <location>
        <begin position="740"/>
        <end position="768"/>
    </location>
</feature>
<feature type="compositionally biased region" description="Polar residues" evidence="5">
    <location>
        <begin position="812"/>
        <end position="825"/>
    </location>
</feature>
<feature type="compositionally biased region" description="Basic and acidic residues" evidence="5">
    <location>
        <begin position="887"/>
        <end position="934"/>
    </location>
</feature>
<feature type="modified residue" description="Phosphothreonine" evidence="1">
    <location>
        <position position="184"/>
    </location>
</feature>
<feature type="modified residue" description="Phosphoserine" evidence="19">
    <location>
        <position position="193"/>
    </location>
</feature>
<feature type="modified residue" description="Phosphoserine" evidence="1">
    <location>
        <position position="334"/>
    </location>
</feature>
<feature type="modified residue" description="Phosphoserine" evidence="1">
    <location>
        <position position="347"/>
    </location>
</feature>
<feature type="modified residue" description="Phosphoserine" evidence="19">
    <location>
        <position position="351"/>
    </location>
</feature>
<feature type="modified residue" description="Phosphoserine" evidence="1">
    <location>
        <position position="368"/>
    </location>
</feature>
<feature type="modified residue" description="Phosphoserine" evidence="1">
    <location>
        <position position="373"/>
    </location>
</feature>
<feature type="modified residue" description="Phosphoserine" evidence="1">
    <location>
        <position position="382"/>
    </location>
</feature>
<feature type="modified residue" description="Phosphoserine" evidence="1">
    <location>
        <position position="548"/>
    </location>
</feature>
<feature type="modified residue" description="Phosphoserine" evidence="1">
    <location>
        <position position="555"/>
    </location>
</feature>
<feature type="modified residue" description="Phosphoserine" evidence="1">
    <location>
        <position position="561"/>
    </location>
</feature>
<feature type="modified residue" description="Phosphoserine" evidence="1">
    <location>
        <position position="683"/>
    </location>
</feature>
<feature type="modified residue" description="Phosphoserine" evidence="1">
    <location>
        <position position="767"/>
    </location>
</feature>
<feature type="modified residue" description="Phosphothreonine" evidence="19">
    <location>
        <position position="797"/>
    </location>
</feature>
<feature type="modified residue" description="Phosphoserine" evidence="19">
    <location>
        <position position="812"/>
    </location>
</feature>
<feature type="modified residue" description="Phosphoserine" evidence="19">
    <location>
        <position position="881"/>
    </location>
</feature>
<feature type="modified residue" description="Phosphoserine" evidence="1">
    <location>
        <position position="1077"/>
    </location>
</feature>
<feature type="splice variant" id="VSP_059237" description="In isoform 3, isoform 6, isoform 12 and isoform 15.">
    <original>S</original>
    <variation>SCPTRWYWKLVP</variation>
    <location>
        <position position="207"/>
    </location>
</feature>
<feature type="splice variant" id="VSP_059238" description="In isoform 4, isoform 7, isoform 11 and isoform 16.">
    <original>S</original>
    <variation>SHAIAFCLKESGNKPPM</variation>
    <location>
        <position position="207"/>
    </location>
</feature>
<feature type="splice variant" id="VSP_059239" description="In isoform 5, isoform 8, isoform 14 and isoform 17.">
    <original>S</original>
    <variation>SCPTRWYWKLVPHAIAFCLKESGNKPPM</variation>
    <location>
        <position position="207"/>
    </location>
</feature>
<feature type="splice variant" id="VSP_059240" description="In isoform 10, isoform 11, isoform 12, isoform 13, isoform 14, isoform 15, isoform 16 and isoform 17.">
    <original>H</original>
    <variation>HV</variation>
    <location>
        <position position="331"/>
    </location>
</feature>
<feature type="splice variant" id="VSP_059241" description="In isoform 6, isoform 7, isoform 8, isoform 9, isoform 13, isoform 15, isoform 16 and isoform 17.">
    <location>
        <begin position="398"/>
        <end position="813"/>
    </location>
</feature>
<feature type="splice variant" id="VSP_013705" description="In isoform 2." evidence="16">
    <location>
        <begin position="1042"/>
        <end position="1111"/>
    </location>
</feature>
<feature type="mutagenesis site" description="Retains the ability to interact with microtubules but abolishes the apical localization in epithelial cells." evidence="9">
    <original>LEEKR</original>
    <variation>AAAAA</variation>
    <location>
        <begin position="608"/>
        <end position="612"/>
    </location>
</feature>
<feature type="sequence conflict" description="In Ref. 6; BAD90256." evidence="17" ref="6">
    <original>DGASPAQPS</original>
    <variation>LTSLSSCPQ</variation>
    <location>
        <begin position="199"/>
        <end position="207"/>
    </location>
</feature>
<feature type="sequence conflict" description="In Ref. 2; BAC38313." evidence="17" ref="2">
    <original>K</original>
    <variation>E</variation>
    <location>
        <position position="892"/>
    </location>
</feature>
<feature type="helix" evidence="22">
    <location>
        <begin position="462"/>
        <end position="469"/>
    </location>
</feature>
<feature type="helix" evidence="23">
    <location>
        <begin position="568"/>
        <end position="576"/>
    </location>
</feature>
<feature type="helix" evidence="21">
    <location>
        <begin position="1125"/>
        <end position="1134"/>
    </location>
</feature>
<feature type="turn" evidence="20">
    <location>
        <begin position="1135"/>
        <end position="1137"/>
    </location>
</feature>
<feature type="helix" evidence="21">
    <location>
        <begin position="1143"/>
        <end position="1155"/>
    </location>
</feature>
<feature type="strand" evidence="21">
    <location>
        <begin position="1161"/>
        <end position="1167"/>
    </location>
</feature>
<feature type="strand" evidence="21">
    <location>
        <begin position="1172"/>
        <end position="1178"/>
    </location>
</feature>
<feature type="turn" evidence="21">
    <location>
        <begin position="1180"/>
        <end position="1182"/>
    </location>
</feature>
<feature type="strand" evidence="21">
    <location>
        <begin position="1185"/>
        <end position="1192"/>
    </location>
</feature>
<feature type="strand" evidence="21">
    <location>
        <begin position="1194"/>
        <end position="1196"/>
    </location>
</feature>
<feature type="helix" evidence="21">
    <location>
        <begin position="1198"/>
        <end position="1200"/>
    </location>
</feature>
<feature type="strand" evidence="21">
    <location>
        <begin position="1201"/>
        <end position="1208"/>
    </location>
</feature>
<feature type="turn" evidence="21">
    <location>
        <begin position="1209"/>
        <end position="1212"/>
    </location>
</feature>
<feature type="strand" evidence="21">
    <location>
        <begin position="1213"/>
        <end position="1217"/>
    </location>
</feature>
<feature type="strand" evidence="20">
    <location>
        <begin position="1218"/>
        <end position="1221"/>
    </location>
</feature>
<feature type="strand" evidence="21">
    <location>
        <begin position="1228"/>
        <end position="1231"/>
    </location>
</feature>
<feature type="helix" evidence="21">
    <location>
        <begin position="1233"/>
        <end position="1235"/>
    </location>
</feature>
<gene>
    <name evidence="18" type="primary">Camsap3</name>
    <name evidence="16" type="synonym">Kiaa1543</name>
</gene>
<comment type="function">
    <text evidence="1 6 8 9 11 13">Key microtubule-organizing protein that specifically binds the minus-end of non-centrosomal microtubules and regulates their dynamics and organization (PubMed:23169647, PubMed:24706919, PubMed:26715742). Specifically recognizes growing microtubule minus-ends and autonomously decorates and stabilizes microtubule lattice formed by microtubule minus-end polymerization (PubMed:24706919). Acts on free microtubule minus-ends that are not capped by microtubule-nucleating proteins or other factors and protects microtubule minus-ends from depolymerization (PubMed:24706919). In addition, it also reduces the velocity of microtubule polymerization (PubMed:24706919). Required for the biogenesis and the maintenance of zonula adherens by anchoring the minus-end of microtubules to zonula adherens and by recruiting the kinesin KIFC3 to those junctional sites (By similarity). Required for orienting the apical-to-basal polarity of microtubules in epithelial cells: acts by tethering non-centrosomal microtubules to the apical cortex, leading to their longitudinal orientation (PubMed:26715742). Plays a key role in early embryos, which lack centrosomes: accumulates at the microtubule bridges that connect pairs of cells and enables the formation of a non-centrosomal microtubule-organizing center that directs intracellular transport in the early embryo (PubMed:28860385). Couples non-centrosomal microtubules with actin: interaction with MACF1 at the minus ends of non-centrosomal microtubules, tethers the microtubules to actin filaments, regulating focal adhesion size and cell migration (By similarity). Plays a key role in the generation of non-centrosomal microtubules by accumulating in the pericentrosomal region and cooperating with KATNA1 to release non-centrosomal microtubules from the centrosome (By similarity). Through the microtubule cytoskeleton, also regulates the organization of cellular organelles including the Golgi and the early endosomes (By similarity). Through interaction with AKAP9, involved in translocation of Golgi vesicles in epithelial cells, where microtubules are mainly non-centrosomal (By similarity). Plays an important role in motile cilia function by facilitatating proper orientation of basal bodies and formation of central microtubule pairs in motile cilia (PubMed:32482850).</text>
</comment>
<comment type="subunit">
    <text evidence="1 6 10 12">Interacts with PLEKHA7 (By similarity). Interacts with CAMSAP2 (PubMed:23169647). Interacts with KATNA1 and KATNB1; leading to regulate the length of CAMSAP3-decorated microtubule stretches (By similarity). Interacts with AKAP9; regulating Golgi assembly in epithelial cells (By similarity). Interacts with MACF1 (By similarity). Interacts with isoform C of CDH23; leading to inhibit CAMSAP3 ability to induce microtubule bundle formation (PubMed:27349180). Interacts with AKNA (PubMed:30787442).</text>
</comment>
<comment type="interaction">
    <interactant intactId="EBI-2125556">
        <id>Q80VC9</id>
    </interactant>
    <interactant intactId="EBI-8839434">
        <id>Q8C1B1</id>
        <label>Camsap2</label>
    </interactant>
    <organismsDiffer>false</organismsDiffer>
    <experiments>2</experiments>
</comment>
<comment type="subcellular location">
    <subcellularLocation>
        <location evidence="7 8 9 11">Cytoplasm</location>
        <location evidence="7 8 9 11">Cytoskeleton</location>
    </subcellularLocation>
    <subcellularLocation>
        <location evidence="1">Cell junction</location>
        <location evidence="1">Adherens junction</location>
    </subcellularLocation>
    <subcellularLocation>
        <location evidence="1">Cytoplasm</location>
    </subcellularLocation>
    <subcellularLocation>
        <location evidence="13">Cytoplasm</location>
        <location evidence="13">Cytoskeleton</location>
        <location evidence="13">Cilium axoneme</location>
    </subcellularLocation>
    <subcellularLocation>
        <location evidence="13">Cytoplasm</location>
        <location evidence="13">Cytoskeleton</location>
        <location evidence="13">Cilium basal body</location>
    </subcellularLocation>
    <text evidence="1 11">Scattered in the cytoplasm, associated with the minus-end of microtubules and also detected at the centrosomes (PubMed:24706919, PubMed:26715742). Decorates the minus-end of microtubules by decreasing the rate of tubulin incorporation and remaining bound (By similarity). Localizes along zonula adherens only at mature cell-cell contacts (By similarity). In early embryos, accumulates at the microtubule bridges that connect pairs of cells: this structure is present in early embryos, which lack centrosomes (PubMed:28860385). This cytokinetic bridge does not undergo stereotypical abscission after cell division (PubMed:28860385). Accumulates to the pericentrosomal region following interaction with KATNA1 (By similarity).</text>
</comment>
<comment type="alternative products">
    <event type="alternative splicing"/>
    <isoform>
        <id>Q80VC9-1</id>
        <name>1</name>
        <name evidence="15">Ld</name>
        <sequence type="displayed"/>
    </isoform>
    <isoform>
        <id>Q80VC9-2</id>
        <name>2</name>
        <sequence type="described" ref="VSP_013705"/>
    </isoform>
    <isoform>
        <id>Q80VC9-3</id>
        <name>3</name>
        <name evidence="15">Lc variant 2</name>
        <sequence type="described" ref="VSP_059237"/>
    </isoform>
    <isoform>
        <id>Q80VC9-4</id>
        <name>4</name>
        <name evidence="15">Lb variant 2</name>
        <sequence type="described" ref="VSP_059238"/>
    </isoform>
    <isoform>
        <id>Q80VC9-5</id>
        <name>5</name>
        <name evidence="15">La variant 2</name>
        <sequence type="described" ref="VSP_059239"/>
    </isoform>
    <isoform>
        <id>Q80VC9-6</id>
        <name>6</name>
        <name evidence="15">Sc variant 2</name>
        <sequence type="described" ref="VSP_059237 VSP_059241"/>
    </isoform>
    <isoform>
        <id>Q80VC9-7</id>
        <name>7</name>
        <name evidence="15">Sb variant 2</name>
        <sequence type="described" ref="VSP_059238 VSP_059241"/>
    </isoform>
    <isoform>
        <id>Q80VC9-8</id>
        <name>8</name>
        <name evidence="15">Sa variant 2</name>
        <sequence type="described" ref="VSP_059239 VSP_059241"/>
    </isoform>
    <isoform>
        <id>Q80VC9-9</id>
        <name>9</name>
        <name evidence="15">Sd variant 2</name>
        <sequence type="described" ref="VSP_059241"/>
    </isoform>
    <isoform>
        <id>Q80VC9-10</id>
        <name>10</name>
        <name evidence="15">Ld variant 1</name>
        <sequence type="described" ref="VSP_059240"/>
    </isoform>
    <isoform>
        <id>Q80VC9-11</id>
        <name>11</name>
        <name evidence="15">Lb variant 1</name>
        <sequence type="described" ref="VSP_059238 VSP_059240"/>
    </isoform>
    <isoform>
        <id>Q80VC9-12</id>
        <name>12</name>
        <name evidence="15">Lc variant 1</name>
        <sequence type="described" ref="VSP_059237 VSP_059240"/>
    </isoform>
    <isoform>
        <id>Q80VC9-13</id>
        <name>13</name>
        <name evidence="15">Sd variant 1</name>
        <sequence type="described" ref="VSP_059240 VSP_059241"/>
    </isoform>
    <isoform>
        <id>Q80VC9-14</id>
        <name>14</name>
        <name evidence="15">La variant 1</name>
        <sequence type="described" ref="VSP_059239 VSP_059240"/>
    </isoform>
    <isoform>
        <id>Q80VC9-15</id>
        <name>15</name>
        <name evidence="15">Sc variant 1</name>
        <sequence type="described" ref="VSP_059237 VSP_059240 VSP_059241"/>
    </isoform>
    <isoform>
        <id>Q80VC9-16</id>
        <name>16</name>
        <name evidence="15">Sb variant 1</name>
        <sequence type="described" ref="VSP_059238 VSP_059240 VSP_059241"/>
    </isoform>
    <isoform>
        <id>Q80VC9-17</id>
        <name>17</name>
        <name evidence="15">Sa variant 1</name>
        <sequence type="described" ref="VSP_059239 VSP_059240 VSP_059241"/>
    </isoform>
</comment>
<comment type="tissue specificity">
    <text evidence="7 13">Expressed at the apical surface of respiratory epithelia, as well as in the acini of submucosal glands (at protein level) (PubMed:32482850). In cochlea, restricted to the organ of Corti and increases during development (at protein level) (PubMed:24244856). Highly expressed in both sensory hair cells and supporting cells (PubMed:24244856).</text>
</comment>
<comment type="domain">
    <text evidence="1 4">The CKK domain binds microtubules and specifically recognizes the minus-end of microtubules.</text>
</comment>
<comment type="disruption phenotype">
    <text evidence="9 13">Mice are viable but show growth defects (PubMed:26715742). Disorganization of epithelial architecture, characterized by impaired apical-to-basal polarity of microtubules in epithelial cells (PubMed:26715742). Defects in the stereotypic positioning of the nucleus and Golgi apparatus (PubMed:26715742). Mice display subfertility in both sexes and severe nasal airway blockage leading to coughing, sneezing, hyposmia and rhinosinusitis (PubMed:32482850). Majority of cilia lack the central microtubule pair in their axoneme and display disorientated basal bodies and defects in ciliary motion, which is no longer synchronized (PubMed:32482850).</text>
</comment>
<comment type="similarity">
    <text evidence="4">Belongs to the CAMSAP1 family.</text>
</comment>
<sequence length="1252" mass="135175">MVEAAPAGSGPLRRTFLVPEIKSLDQYDFSRAKAAASLAWVLRAAFGGAEHVPPELWEPFYTDQYAQEHVKPPVTRLLLSAELYCRAWRQALPQLEPSPSPSALLALLARRGTVPSLPEHPVREADLKHQPILMGAHLAVIDALMVAFSFEWTKTLPGPLALSSLEHKLLFWVDTTVRRLQEKTEQEAAQRASPAAPLDGASPAQPSIRYRKDRAIARRAPCFPNVTTLQDLASGAALAATIHCYCPQLLRLEEVCLKDPMSVADSLYNLQLVQDFCASHLPRGCPLSLEDLLYVPPPLKVNLVVLLAEMYMCFEVLKPDFVQAKDLPDGHAVSPRNTETVPSQNNSGSSSPVFNFRHPLLSPGGPQSPLRGSTGSLKSSPSMSHMEALGKAWNRQLSRPLSQAVSFSTPFGLDSDVDVVMGDPVLLRSVSSDSLGPPRPVSTSSRNSAQPAPESGDLPTIEEALQIIHSAEPRLLPDGAADGSFYLHSPEGLSKPPLSPYPPEGASKPLSDRLNKAPIYISHPENPSKSSPCSTGEILKPPPPSEGSPKAVASSPAANNSEVKMTSFAERKKQLVKAEAESGLGSPTSTPVAPEALSSEMSELGARLEEKRRAIEAQKRRIEAIFAKHRQRLGKSAFLQVQPREAAGEAEEEAELGSVPGGERPAGEGQGEPSLRHKSVTFSPDLGPVPPEGLGDYNRAVSKLSAALSSLQRDMQRLTDQQQRLLAPPEAPGPAPPPAAWVIPGPATGPKAASPSPARRAPAARRSPGPGPSPTPRSPKHARPAELKLAPLTRVLTPPHDVDSLPHLRKFSPSQVPVQTRSSILLSEGTPPEEPTTKPALIEIPLASLGEPAADEEGDGSPPGAEDSLEEEASSEGEPRSGLGFFYKDEDKPEDEMAQKRASLLERQQRRVEEARRRKQWQEAEKEQKREEAARLAQEAPGLAFTTPVVASAAPVATLAPTTRAMAPAEEEVGPRRGDFTRLEYERRAQLKLMDDLDKVLRPRASGTGGPGRGGRRATRPRSGCCDDSALARSPARGLLGSRLSKVYSQSTLSLSTVANEAPNNLGVKRPTSRAPSPSGLMSPSRLPGSRERDWENGSNASSPASVPEYTGPRLYKEPSAKSNKFIIHNALSHCCLAGKVNEPQKNRILEEIEKSKANHFLILFRDSSCQFRALYTLSGETEELSRLAGYGPRTVTPAMVEGIYKYNSDRKRFTQIPAKTMSMSVDAFTIQGHLWQSKKPTTPKKGGGTPK</sequence>
<name>CAMP3_MOUSE</name>
<protein>
    <recommendedName>
        <fullName evidence="17">Calmodulin-regulated spectrin-associated protein 3</fullName>
    </recommendedName>
    <alternativeName>
        <fullName evidence="15">Marshalin</fullName>
    </alternativeName>
    <alternativeName>
        <fullName evidence="14">Protein Nezha</fullName>
    </alternativeName>
</protein>
<evidence type="ECO:0000250" key="1">
    <source>
        <dbReference type="UniProtKB" id="Q9P1Y5"/>
    </source>
</evidence>
<evidence type="ECO:0000255" key="2"/>
<evidence type="ECO:0000255" key="3">
    <source>
        <dbReference type="PROSITE-ProRule" id="PRU00044"/>
    </source>
</evidence>
<evidence type="ECO:0000255" key="4">
    <source>
        <dbReference type="PROSITE-ProRule" id="PRU00841"/>
    </source>
</evidence>
<evidence type="ECO:0000256" key="5">
    <source>
        <dbReference type="SAM" id="MobiDB-lite"/>
    </source>
</evidence>
<evidence type="ECO:0000269" key="6">
    <source>
    </source>
</evidence>
<evidence type="ECO:0000269" key="7">
    <source>
    </source>
</evidence>
<evidence type="ECO:0000269" key="8">
    <source>
    </source>
</evidence>
<evidence type="ECO:0000269" key="9">
    <source>
    </source>
</evidence>
<evidence type="ECO:0000269" key="10">
    <source>
    </source>
</evidence>
<evidence type="ECO:0000269" key="11">
    <source>
    </source>
</evidence>
<evidence type="ECO:0000269" key="12">
    <source>
    </source>
</evidence>
<evidence type="ECO:0000269" key="13">
    <source>
    </source>
</evidence>
<evidence type="ECO:0000303" key="14">
    <source>
    </source>
</evidence>
<evidence type="ECO:0000303" key="15">
    <source>
    </source>
</evidence>
<evidence type="ECO:0000303" key="16">
    <source ref="6"/>
</evidence>
<evidence type="ECO:0000305" key="17"/>
<evidence type="ECO:0000312" key="18">
    <source>
        <dbReference type="MGI" id="MGI:1916947"/>
    </source>
</evidence>
<evidence type="ECO:0007744" key="19">
    <source>
    </source>
</evidence>
<evidence type="ECO:0007829" key="20">
    <source>
        <dbReference type="PDB" id="1UGJ"/>
    </source>
</evidence>
<evidence type="ECO:0007829" key="21">
    <source>
        <dbReference type="PDB" id="5LZN"/>
    </source>
</evidence>
<evidence type="ECO:0007829" key="22">
    <source>
        <dbReference type="PDB" id="5OW5"/>
    </source>
</evidence>
<evidence type="ECO:0007829" key="23">
    <source>
        <dbReference type="PDB" id="7WEK"/>
    </source>
</evidence>
<keyword id="KW-0002">3D-structure</keyword>
<keyword id="KW-0025">Alternative splicing</keyword>
<keyword id="KW-0965">Cell junction</keyword>
<keyword id="KW-0966">Cell projection</keyword>
<keyword id="KW-0970">Cilium biogenesis/degradation</keyword>
<keyword id="KW-0175">Coiled coil</keyword>
<keyword id="KW-0963">Cytoplasm</keyword>
<keyword id="KW-0206">Cytoskeleton</keyword>
<keyword id="KW-0903">Direct protein sequencing</keyword>
<keyword id="KW-0493">Microtubule</keyword>
<keyword id="KW-0597">Phosphoprotein</keyword>
<keyword id="KW-1185">Reference proteome</keyword>